<organism>
    <name type="scientific">Tropheryma whipplei (strain Twist)</name>
    <name type="common">Whipple's bacillus</name>
    <dbReference type="NCBI Taxonomy" id="203267"/>
    <lineage>
        <taxon>Bacteria</taxon>
        <taxon>Bacillati</taxon>
        <taxon>Actinomycetota</taxon>
        <taxon>Actinomycetes</taxon>
        <taxon>Micrococcales</taxon>
        <taxon>Tropherymataceae</taxon>
        <taxon>Tropheryma</taxon>
    </lineage>
</organism>
<evidence type="ECO:0000255" key="1">
    <source>
        <dbReference type="HAMAP-Rule" id="MF_00059"/>
    </source>
</evidence>
<keyword id="KW-0240">DNA-directed RNA polymerase</keyword>
<keyword id="KW-0548">Nucleotidyltransferase</keyword>
<keyword id="KW-1185">Reference proteome</keyword>
<keyword id="KW-0804">Transcription</keyword>
<keyword id="KW-0808">Transferase</keyword>
<comment type="function">
    <text evidence="1">DNA-dependent RNA polymerase catalyzes the transcription of DNA into RNA using the four ribonucleoside triphosphates as substrates.</text>
</comment>
<comment type="catalytic activity">
    <reaction evidence="1">
        <text>RNA(n) + a ribonucleoside 5'-triphosphate = RNA(n+1) + diphosphate</text>
        <dbReference type="Rhea" id="RHEA:21248"/>
        <dbReference type="Rhea" id="RHEA-COMP:14527"/>
        <dbReference type="Rhea" id="RHEA-COMP:17342"/>
        <dbReference type="ChEBI" id="CHEBI:33019"/>
        <dbReference type="ChEBI" id="CHEBI:61557"/>
        <dbReference type="ChEBI" id="CHEBI:140395"/>
        <dbReference type="EC" id="2.7.7.6"/>
    </reaction>
</comment>
<comment type="subunit">
    <text evidence="1">Homodimer. The RNAP catalytic core consists of 2 alpha, 1 beta, 1 beta' and 1 omega subunit. When a sigma factor is associated with the core the holoenzyme is formed, which can initiate transcription.</text>
</comment>
<comment type="domain">
    <text evidence="1">The N-terminal domain is essential for RNAP assembly and basal transcription, whereas the C-terminal domain is involved in interaction with transcriptional regulators and with upstream promoter elements.</text>
</comment>
<comment type="similarity">
    <text evidence="1">Belongs to the RNA polymerase alpha chain family.</text>
</comment>
<sequence>MLIAHRPTLIEKKVSDIRSRFIIEPLEPGFGYTLGNSLRRTLLSSIPGAAVTSINIQGVMHEFSTIPGVKEDVTEIVLNVKRLVISSEIDEPFTVRLYKTGEGEVLAKDIEVPTGIEIGNGDLVIATLAKDAVFDMQLTIERGRGYVSAEQNRNDGMSLAGHIPVDSIYSPVHKVTYRVEATRAGERTDFDRLIIDVETKPSILPRDAVASAGKTLCELFGLARELNSQAEGVEFGVDSMIPESDEDLRIPIEDLGLSVRSYNCLKREGVNYVSELLGFSEQELLDIRNFGQKSADEVQEKLAELGHSLKGSVPGFDGSYFDPNYGS</sequence>
<name>RPOA_TROWT</name>
<dbReference type="EC" id="2.7.7.6" evidence="1"/>
<dbReference type="EMBL" id="AE014184">
    <property type="protein sequence ID" value="AAO44625.1"/>
    <property type="molecule type" value="Genomic_DNA"/>
</dbReference>
<dbReference type="RefSeq" id="WP_011096190.1">
    <property type="nucleotide sequence ID" value="NC_004572.3"/>
</dbReference>
<dbReference type="SMR" id="Q820D4"/>
<dbReference type="STRING" id="203267.TWT_528"/>
<dbReference type="KEGG" id="twh:TWT_528"/>
<dbReference type="eggNOG" id="COG0202">
    <property type="taxonomic scope" value="Bacteria"/>
</dbReference>
<dbReference type="HOGENOM" id="CLU_053084_0_1_11"/>
<dbReference type="OrthoDB" id="9805706at2"/>
<dbReference type="Proteomes" id="UP000002200">
    <property type="component" value="Chromosome"/>
</dbReference>
<dbReference type="GO" id="GO:0005737">
    <property type="term" value="C:cytoplasm"/>
    <property type="evidence" value="ECO:0007669"/>
    <property type="project" value="UniProtKB-ARBA"/>
</dbReference>
<dbReference type="GO" id="GO:0000428">
    <property type="term" value="C:DNA-directed RNA polymerase complex"/>
    <property type="evidence" value="ECO:0007669"/>
    <property type="project" value="UniProtKB-KW"/>
</dbReference>
<dbReference type="GO" id="GO:0003677">
    <property type="term" value="F:DNA binding"/>
    <property type="evidence" value="ECO:0007669"/>
    <property type="project" value="UniProtKB-UniRule"/>
</dbReference>
<dbReference type="GO" id="GO:0003899">
    <property type="term" value="F:DNA-directed RNA polymerase activity"/>
    <property type="evidence" value="ECO:0007669"/>
    <property type="project" value="UniProtKB-UniRule"/>
</dbReference>
<dbReference type="GO" id="GO:0046983">
    <property type="term" value="F:protein dimerization activity"/>
    <property type="evidence" value="ECO:0007669"/>
    <property type="project" value="InterPro"/>
</dbReference>
<dbReference type="GO" id="GO:0006351">
    <property type="term" value="P:DNA-templated transcription"/>
    <property type="evidence" value="ECO:0007669"/>
    <property type="project" value="UniProtKB-UniRule"/>
</dbReference>
<dbReference type="CDD" id="cd06928">
    <property type="entry name" value="RNAP_alpha_NTD"/>
    <property type="match status" value="1"/>
</dbReference>
<dbReference type="FunFam" id="2.170.120.12:FF:000001">
    <property type="entry name" value="DNA-directed RNA polymerase subunit alpha"/>
    <property type="match status" value="1"/>
</dbReference>
<dbReference type="Gene3D" id="1.10.150.20">
    <property type="entry name" value="5' to 3' exonuclease, C-terminal subdomain"/>
    <property type="match status" value="1"/>
</dbReference>
<dbReference type="Gene3D" id="2.170.120.12">
    <property type="entry name" value="DNA-directed RNA polymerase, insert domain"/>
    <property type="match status" value="1"/>
</dbReference>
<dbReference type="Gene3D" id="3.30.1360.10">
    <property type="entry name" value="RNA polymerase, RBP11-like subunit"/>
    <property type="match status" value="1"/>
</dbReference>
<dbReference type="HAMAP" id="MF_00059">
    <property type="entry name" value="RNApol_bact_RpoA"/>
    <property type="match status" value="1"/>
</dbReference>
<dbReference type="InterPro" id="IPR011262">
    <property type="entry name" value="DNA-dir_RNA_pol_insert"/>
</dbReference>
<dbReference type="InterPro" id="IPR011263">
    <property type="entry name" value="DNA-dir_RNA_pol_RpoA/D/Rpb3"/>
</dbReference>
<dbReference type="InterPro" id="IPR011773">
    <property type="entry name" value="DNA-dir_RpoA"/>
</dbReference>
<dbReference type="InterPro" id="IPR036603">
    <property type="entry name" value="RBP11-like"/>
</dbReference>
<dbReference type="InterPro" id="IPR011260">
    <property type="entry name" value="RNAP_asu_C"/>
</dbReference>
<dbReference type="InterPro" id="IPR036643">
    <property type="entry name" value="RNApol_insert_sf"/>
</dbReference>
<dbReference type="NCBIfam" id="NF003513">
    <property type="entry name" value="PRK05182.1-2"/>
    <property type="match status" value="1"/>
</dbReference>
<dbReference type="NCBIfam" id="NF003514">
    <property type="entry name" value="PRK05182.1-4"/>
    <property type="match status" value="1"/>
</dbReference>
<dbReference type="NCBIfam" id="NF003519">
    <property type="entry name" value="PRK05182.2-5"/>
    <property type="match status" value="1"/>
</dbReference>
<dbReference type="NCBIfam" id="TIGR02027">
    <property type="entry name" value="rpoA"/>
    <property type="match status" value="1"/>
</dbReference>
<dbReference type="Pfam" id="PF01000">
    <property type="entry name" value="RNA_pol_A_bac"/>
    <property type="match status" value="1"/>
</dbReference>
<dbReference type="Pfam" id="PF03118">
    <property type="entry name" value="RNA_pol_A_CTD"/>
    <property type="match status" value="1"/>
</dbReference>
<dbReference type="Pfam" id="PF01193">
    <property type="entry name" value="RNA_pol_L"/>
    <property type="match status" value="1"/>
</dbReference>
<dbReference type="SMART" id="SM00662">
    <property type="entry name" value="RPOLD"/>
    <property type="match status" value="1"/>
</dbReference>
<dbReference type="SUPFAM" id="SSF47789">
    <property type="entry name" value="C-terminal domain of RNA polymerase alpha subunit"/>
    <property type="match status" value="1"/>
</dbReference>
<dbReference type="SUPFAM" id="SSF56553">
    <property type="entry name" value="Insert subdomain of RNA polymerase alpha subunit"/>
    <property type="match status" value="1"/>
</dbReference>
<dbReference type="SUPFAM" id="SSF55257">
    <property type="entry name" value="RBP11-like subunits of RNA polymerase"/>
    <property type="match status" value="1"/>
</dbReference>
<proteinExistence type="inferred from homology"/>
<gene>
    <name evidence="1" type="primary">rpoA</name>
    <name type="ordered locus">TWT_528</name>
</gene>
<feature type="chain" id="PRO_0000175413" description="DNA-directed RNA polymerase subunit alpha">
    <location>
        <begin position="1"/>
        <end position="327"/>
    </location>
</feature>
<feature type="region of interest" description="Alpha N-terminal domain (alpha-NTD)" evidence="1">
    <location>
        <begin position="1"/>
        <end position="227"/>
    </location>
</feature>
<feature type="region of interest" description="Alpha C-terminal domain (alpha-CTD)" evidence="1">
    <location>
        <begin position="244"/>
        <end position="327"/>
    </location>
</feature>
<protein>
    <recommendedName>
        <fullName evidence="1">DNA-directed RNA polymerase subunit alpha</fullName>
        <shortName evidence="1">RNAP subunit alpha</shortName>
        <ecNumber evidence="1">2.7.7.6</ecNumber>
    </recommendedName>
    <alternativeName>
        <fullName evidence="1">RNA polymerase subunit alpha</fullName>
    </alternativeName>
    <alternativeName>
        <fullName evidence="1">Transcriptase subunit alpha</fullName>
    </alternativeName>
</protein>
<accession>Q820D4</accession>
<reference key="1">
    <citation type="journal article" date="2003" name="Genome Res.">
        <title>Tropheryma whipplei twist: a human pathogenic Actinobacteria with a reduced genome.</title>
        <authorList>
            <person name="Raoult D."/>
            <person name="Ogata H."/>
            <person name="Audic S."/>
            <person name="Robert C."/>
            <person name="Suhre K."/>
            <person name="Drancourt M."/>
            <person name="Claverie J.-M."/>
        </authorList>
    </citation>
    <scope>NUCLEOTIDE SEQUENCE [LARGE SCALE GENOMIC DNA]</scope>
    <source>
        <strain>Twist</strain>
    </source>
</reference>